<name>CTC1_PONAB</name>
<accession>Q5RDX3</accession>
<sequence length="1217" mass="134637">MAAGRAQVPSSEQAWLEDAQVFIQKTLCPAVKEPNVQLTPLIIDCVKTVWLSQGRNQGSTLPLSYSFVSVQDLKTHQRLPCCSHLSWSSSAYQAWAQEAGPNGNPLPREQLLLLGTLTDLSADLEQECRNGSLYVRDNTGVLSCELIDLDLSWLGHLFLFPCWSYLPPARWNSSGEGHLELWDAPVPVFPLTVSPGPVTPIPVLYPESASRLLRLRNKLRGVQRNLAGNLVRLSALVKSKQKAYFILSLGRSHPAVTHVSVIVQVPAQLVWHRVLRPGTAYVLTELRVSKIRGQRQHVWMTSQSSRLLLLKPECVQELELELEGPLLEADPKPLPTPSNSEDKKDPEGLARYSRLLSYSGAVTGVLNEPAGLYELDGQLGLCLAYQQFRGLRRVMRPGVCLQLQDVHLLQSVGGGTRRPVLAPCLRGAVLLQSFSRQKPGTHSSRQAYGASLYEQLVWERQLGLPLYLWATKALEELAGKLCPHVLRHHQFLQHSSPGSPSLGLQLLVPTLDLLAPPGSPVRNAHNEILEEPHHCPLQKYTRLQTPSSFPTLAALKEEGQREAWASFDPEALLPLPEASHLPSCQLNRHLAWSWLCLLPSAFHPAQVLLGVLVASSHKGCLQLRDQSGSLPCLLLAKHSQPLSDPRLIGCLVRAERFQLIVERDVRSSFPSWKELSMPGFIQKQQARVYVQFFLADALILPVPRPSLHSATPSTPQTDPTGPEGPHLGQSRLFLLCHKEALMKRNFCVPPGASPEVPKPVLSFCVLGSWLGGTQRKEGTGWGLPEPQGNDDKDQKVHLIFFGSSVRWFEFLHPGQVYRLVAPGPPTPMLFEKDGSSCISRRPLELAGCASCLTVQDNWTLELESSQDIQDVLDANKALPESSLTDLLSDNFTDSLVSFSAEILSRTLCEPLVASLWMKLGNTGTMRRCVKLTVALETAECEFPPHLDVYIEDPHLPPSLGLLPGARVHFSQLEKRVSRSHNVYCCFRSSTYVQVLSFPPETTISIPLPHIYLAELRQGGQSPFQATTSCHIVSVFSLQLFWVCAYCTSICRQGKCTRLGPTCPTQTAVSQAIIRLLVEDGTAEAVVTCRNHHVAAALGLCPREWASLLEFVRVPGRVVLQFAGPGAQLESSARVDKPMTMFLWTLCTSPSVLRPIVLSFELERKPSKIVPLEPPRLQRFQCGELPFLTHVNPRLRLSCLSIRESEYSSSLGILASSC</sequence>
<keyword id="KW-0158">Chromosome</keyword>
<keyword id="KW-0238">DNA-binding</keyword>
<keyword id="KW-0539">Nucleus</keyword>
<keyword id="KW-1185">Reference proteome</keyword>
<keyword id="KW-0779">Telomere</keyword>
<proteinExistence type="evidence at transcript level"/>
<comment type="function">
    <text evidence="1 2">Component of the CST complex proposed to act as a specialized replication factor promoting DNA replication under conditions of replication stress or natural replication barriers such as the telomere duplex. The CST complex binds single-stranded DNA with high affinity in a sequence-independent manner, while isolated subunits bind DNA with low affinity by themselves. Initially the CST complex has been proposed to protect telomeres from DNA degradation. However, the CST complex has been shown to be involved in several aspects of telomere replication. The CST complex inhibits telomerase and is involved in telomere length homeostasis; it is proposed to bind to newly telomerase-synthesized 3' overhangs and to terminate telomerase action implicating the association with the ACD:POT1 complex thus interfering with its telomerase stimulation activity. The CST complex is also proposed to be involved in fill-in synthesis of the telomeric C-strand probably implicating recruitment and activation of DNA polymerase alpha. The CST complex facilitates recovery from many forms of exogenous DNA damage; seems to be involved in the re-initiation of DNA replication at repaired forks and/or dormant origins. Involved in telomere maintenance. Involved in genome stability (By similarity). May be in involved in telomeric C-strand fill-in during late S/G2 phase (By similarity).</text>
</comment>
<comment type="subunit">
    <text evidence="1 2">Component of the CST complex, composed of TEN1/C17orf106, CTC1/C17orf68 and STN1; in the complex interacts directly with STN1. Interacts with ACD and POT1 (By similarity).</text>
</comment>
<comment type="subcellular location">
    <subcellularLocation>
        <location evidence="1 2">Nucleus</location>
    </subcellularLocation>
    <subcellularLocation>
        <location evidence="1 2">Chromosome</location>
        <location evidence="1 2">Telomere</location>
    </subcellularLocation>
    <text evidence="4">A transmembrane region is predicted by sequence analysis tools (ESKW, MEMSAT and Phobius); however, given the telomeric localization of the protein, the relevance of the transmembrane region is unsure in vivo.</text>
</comment>
<comment type="similarity">
    <text evidence="4">Belongs to the CTC1 family.</text>
</comment>
<reference key="1">
    <citation type="submission" date="2004-11" db="EMBL/GenBank/DDBJ databases">
        <authorList>
            <consortium name="The German cDNA consortium"/>
        </authorList>
    </citation>
    <scope>NUCLEOTIDE SEQUENCE [LARGE SCALE MRNA]</scope>
    <source>
        <tissue>Kidney</tissue>
    </source>
</reference>
<feature type="chain" id="PRO_0000287182" description="CST complex subunit CTC1">
    <location>
        <begin position="1"/>
        <end position="1217"/>
    </location>
</feature>
<feature type="region of interest" description="Disordered" evidence="3">
    <location>
        <begin position="327"/>
        <end position="346"/>
    </location>
</feature>
<gene>
    <name type="primary">CTC1</name>
</gene>
<organism>
    <name type="scientific">Pongo abelii</name>
    <name type="common">Sumatran orangutan</name>
    <name type="synonym">Pongo pygmaeus abelii</name>
    <dbReference type="NCBI Taxonomy" id="9601"/>
    <lineage>
        <taxon>Eukaryota</taxon>
        <taxon>Metazoa</taxon>
        <taxon>Chordata</taxon>
        <taxon>Craniata</taxon>
        <taxon>Vertebrata</taxon>
        <taxon>Euteleostomi</taxon>
        <taxon>Mammalia</taxon>
        <taxon>Eutheria</taxon>
        <taxon>Euarchontoglires</taxon>
        <taxon>Primates</taxon>
        <taxon>Haplorrhini</taxon>
        <taxon>Catarrhini</taxon>
        <taxon>Hominidae</taxon>
        <taxon>Pongo</taxon>
    </lineage>
</organism>
<protein>
    <recommendedName>
        <fullName>CST complex subunit CTC1</fullName>
    </recommendedName>
    <alternativeName>
        <fullName>Conserved telomere maintenance component 1</fullName>
    </alternativeName>
</protein>
<dbReference type="EMBL" id="CR857769">
    <property type="protein sequence ID" value="CAH90034.1"/>
    <property type="molecule type" value="mRNA"/>
</dbReference>
<dbReference type="RefSeq" id="NP_001124551.1">
    <property type="nucleotide sequence ID" value="NM_001131079.1"/>
</dbReference>
<dbReference type="SMR" id="Q5RDX3"/>
<dbReference type="FunCoup" id="Q5RDX3">
    <property type="interactions" value="2197"/>
</dbReference>
<dbReference type="STRING" id="9601.ENSPPYP00000008942"/>
<dbReference type="GeneID" id="100127094"/>
<dbReference type="KEGG" id="pon:100127094"/>
<dbReference type="CTD" id="80169"/>
<dbReference type="eggNOG" id="ENOG502RBD3">
    <property type="taxonomic scope" value="Eukaryota"/>
</dbReference>
<dbReference type="InParanoid" id="Q5RDX3"/>
<dbReference type="OrthoDB" id="2314520at2759"/>
<dbReference type="Proteomes" id="UP000001595">
    <property type="component" value="Unplaced"/>
</dbReference>
<dbReference type="GO" id="GO:1990879">
    <property type="term" value="C:CST complex"/>
    <property type="evidence" value="ECO:0007669"/>
    <property type="project" value="TreeGrafter"/>
</dbReference>
<dbReference type="GO" id="GO:0005634">
    <property type="term" value="C:nucleus"/>
    <property type="evidence" value="ECO:0000250"/>
    <property type="project" value="UniProtKB"/>
</dbReference>
<dbReference type="GO" id="GO:0003697">
    <property type="term" value="F:single-stranded DNA binding"/>
    <property type="evidence" value="ECO:0000250"/>
    <property type="project" value="UniProtKB"/>
</dbReference>
<dbReference type="GO" id="GO:0042162">
    <property type="term" value="F:telomeric DNA binding"/>
    <property type="evidence" value="ECO:0007669"/>
    <property type="project" value="TreeGrafter"/>
</dbReference>
<dbReference type="GO" id="GO:0045740">
    <property type="term" value="P:positive regulation of DNA replication"/>
    <property type="evidence" value="ECO:0000250"/>
    <property type="project" value="UniProtKB"/>
</dbReference>
<dbReference type="GO" id="GO:0010833">
    <property type="term" value="P:telomere maintenance via telomere lengthening"/>
    <property type="evidence" value="ECO:0007669"/>
    <property type="project" value="TreeGrafter"/>
</dbReference>
<dbReference type="InterPro" id="IPR029156">
    <property type="entry name" value="CTC1"/>
</dbReference>
<dbReference type="InterPro" id="IPR042617">
    <property type="entry name" value="CTC1-like"/>
</dbReference>
<dbReference type="PANTHER" id="PTHR14865">
    <property type="entry name" value="CST COMPLEX SUBUNIT CTC1"/>
    <property type="match status" value="1"/>
</dbReference>
<dbReference type="PANTHER" id="PTHR14865:SF2">
    <property type="entry name" value="CST COMPLEX SUBUNIT CTC1"/>
    <property type="match status" value="1"/>
</dbReference>
<dbReference type="Pfam" id="PF15489">
    <property type="entry name" value="CTC1"/>
    <property type="match status" value="1"/>
</dbReference>
<evidence type="ECO:0000250" key="1">
    <source>
        <dbReference type="UniProtKB" id="Q2NKJ3"/>
    </source>
</evidence>
<evidence type="ECO:0000250" key="2">
    <source>
        <dbReference type="UniProtKB" id="Q5SUQ9"/>
    </source>
</evidence>
<evidence type="ECO:0000256" key="3">
    <source>
        <dbReference type="SAM" id="MobiDB-lite"/>
    </source>
</evidence>
<evidence type="ECO:0000305" key="4"/>